<keyword id="KW-0175">Coiled coil</keyword>
<keyword id="KW-0341">Growth regulation</keyword>
<keyword id="KW-1185">Reference proteome</keyword>
<keyword id="KW-0813">Transport</keyword>
<organism>
    <name type="scientific">Arabidopsis thaliana</name>
    <name type="common">Mouse-ear cress</name>
    <dbReference type="NCBI Taxonomy" id="3702"/>
    <lineage>
        <taxon>Eukaryota</taxon>
        <taxon>Viridiplantae</taxon>
        <taxon>Streptophyta</taxon>
        <taxon>Embryophyta</taxon>
        <taxon>Tracheophyta</taxon>
        <taxon>Spermatophyta</taxon>
        <taxon>Magnoliopsida</taxon>
        <taxon>eudicotyledons</taxon>
        <taxon>Gunneridae</taxon>
        <taxon>Pentapetalae</taxon>
        <taxon>rosids</taxon>
        <taxon>malvids</taxon>
        <taxon>Brassicales</taxon>
        <taxon>Brassicaceae</taxon>
        <taxon>Camelineae</taxon>
        <taxon>Arabidopsis</taxon>
    </lineage>
</organism>
<proteinExistence type="evidence at protein level"/>
<evidence type="ECO:0000255" key="1"/>
<evidence type="ECO:0000256" key="2">
    <source>
        <dbReference type="SAM" id="MobiDB-lite"/>
    </source>
</evidence>
<evidence type="ECO:0000269" key="3">
    <source>
    </source>
</evidence>
<evidence type="ECO:0000303" key="4">
    <source>
    </source>
</evidence>
<evidence type="ECO:0000305" key="5"/>
<evidence type="ECO:0000305" key="6">
    <source>
    </source>
</evidence>
<evidence type="ECO:0000312" key="7">
    <source>
        <dbReference type="Araport" id="AT1G26540"/>
    </source>
</evidence>
<evidence type="ECO:0000312" key="8">
    <source>
        <dbReference type="EMBL" id="AAF98563.1"/>
    </source>
</evidence>
<reference key="1">
    <citation type="journal article" date="2000" name="Nature">
        <title>Sequence and analysis of chromosome 1 of the plant Arabidopsis thaliana.</title>
        <authorList>
            <person name="Theologis A."/>
            <person name="Ecker J.R."/>
            <person name="Palm C.J."/>
            <person name="Federspiel N.A."/>
            <person name="Kaul S."/>
            <person name="White O."/>
            <person name="Alonso J."/>
            <person name="Altafi H."/>
            <person name="Araujo R."/>
            <person name="Bowman C.L."/>
            <person name="Brooks S.Y."/>
            <person name="Buehler E."/>
            <person name="Chan A."/>
            <person name="Chao Q."/>
            <person name="Chen H."/>
            <person name="Cheuk R.F."/>
            <person name="Chin C.W."/>
            <person name="Chung M.K."/>
            <person name="Conn L."/>
            <person name="Conway A.B."/>
            <person name="Conway A.R."/>
            <person name="Creasy T.H."/>
            <person name="Dewar K."/>
            <person name="Dunn P."/>
            <person name="Etgu P."/>
            <person name="Feldblyum T.V."/>
            <person name="Feng J.-D."/>
            <person name="Fong B."/>
            <person name="Fujii C.Y."/>
            <person name="Gill J.E."/>
            <person name="Goldsmith A.D."/>
            <person name="Haas B."/>
            <person name="Hansen N.F."/>
            <person name="Hughes B."/>
            <person name="Huizar L."/>
            <person name="Hunter J.L."/>
            <person name="Jenkins J."/>
            <person name="Johnson-Hopson C."/>
            <person name="Khan S."/>
            <person name="Khaykin E."/>
            <person name="Kim C.J."/>
            <person name="Koo H.L."/>
            <person name="Kremenetskaia I."/>
            <person name="Kurtz D.B."/>
            <person name="Kwan A."/>
            <person name="Lam B."/>
            <person name="Langin-Hooper S."/>
            <person name="Lee A."/>
            <person name="Lee J.M."/>
            <person name="Lenz C.A."/>
            <person name="Li J.H."/>
            <person name="Li Y.-P."/>
            <person name="Lin X."/>
            <person name="Liu S.X."/>
            <person name="Liu Z.A."/>
            <person name="Luros J.S."/>
            <person name="Maiti R."/>
            <person name="Marziali A."/>
            <person name="Militscher J."/>
            <person name="Miranda M."/>
            <person name="Nguyen M."/>
            <person name="Nierman W.C."/>
            <person name="Osborne B.I."/>
            <person name="Pai G."/>
            <person name="Peterson J."/>
            <person name="Pham P.K."/>
            <person name="Rizzo M."/>
            <person name="Rooney T."/>
            <person name="Rowley D."/>
            <person name="Sakano H."/>
            <person name="Salzberg S.L."/>
            <person name="Schwartz J.R."/>
            <person name="Shinn P."/>
            <person name="Southwick A.M."/>
            <person name="Sun H."/>
            <person name="Tallon L.J."/>
            <person name="Tambunga G."/>
            <person name="Toriumi M.J."/>
            <person name="Town C.D."/>
            <person name="Utterback T."/>
            <person name="Van Aken S."/>
            <person name="Vaysberg M."/>
            <person name="Vysotskaia V.S."/>
            <person name="Walker M."/>
            <person name="Wu D."/>
            <person name="Yu G."/>
            <person name="Fraser C.M."/>
            <person name="Venter J.C."/>
            <person name="Davis R.W."/>
        </authorList>
    </citation>
    <scope>NUCLEOTIDE SEQUENCE [LARGE SCALE GENOMIC DNA]</scope>
    <source>
        <strain>cv. Columbia</strain>
    </source>
</reference>
<reference key="2">
    <citation type="journal article" date="2017" name="Plant J.">
        <title>Araport11: a complete reannotation of the Arabidopsis thaliana reference genome.</title>
        <authorList>
            <person name="Cheng C.Y."/>
            <person name="Krishnakumar V."/>
            <person name="Chan A.P."/>
            <person name="Thibaud-Nissen F."/>
            <person name="Schobel S."/>
            <person name="Town C.D."/>
        </authorList>
    </citation>
    <scope>GENOME REANNOTATION</scope>
    <source>
        <strain>cv. Columbia</strain>
    </source>
</reference>
<reference key="3">
    <citation type="journal article" date="2002" name="Science">
        <title>Functional annotation of a full-length Arabidopsis cDNA collection.</title>
        <authorList>
            <person name="Seki M."/>
            <person name="Narusaka M."/>
            <person name="Kamiya A."/>
            <person name="Ishida J."/>
            <person name="Satou M."/>
            <person name="Sakurai T."/>
            <person name="Nakajima M."/>
            <person name="Enju A."/>
            <person name="Akiyama K."/>
            <person name="Oono Y."/>
            <person name="Muramatsu M."/>
            <person name="Hayashizaki Y."/>
            <person name="Kawai J."/>
            <person name="Carninci P."/>
            <person name="Itoh M."/>
            <person name="Ishii Y."/>
            <person name="Arakawa T."/>
            <person name="Shibata K."/>
            <person name="Shinagawa A."/>
            <person name="Shinozaki K."/>
        </authorList>
    </citation>
    <scope>NUCLEOTIDE SEQUENCE [LARGE SCALE MRNA]</scope>
    <source>
        <strain>cv. Columbia</strain>
    </source>
</reference>
<reference key="4">
    <citation type="submission" date="2006-07" db="EMBL/GenBank/DDBJ databases">
        <title>Large-scale analysis of RIKEN Arabidopsis full-length (RAFL) cDNAs.</title>
        <authorList>
            <person name="Totoki Y."/>
            <person name="Seki M."/>
            <person name="Ishida J."/>
            <person name="Nakajima M."/>
            <person name="Enju A."/>
            <person name="Kamiya A."/>
            <person name="Narusaka M."/>
            <person name="Shin-i T."/>
            <person name="Nakagawa M."/>
            <person name="Sakamoto N."/>
            <person name="Oishi K."/>
            <person name="Kohara Y."/>
            <person name="Kobayashi M."/>
            <person name="Toyoda A."/>
            <person name="Sakaki Y."/>
            <person name="Sakurai T."/>
            <person name="Iida K."/>
            <person name="Akiyama K."/>
            <person name="Satou M."/>
            <person name="Toyoda T."/>
            <person name="Konagaya A."/>
            <person name="Carninci P."/>
            <person name="Kawai J."/>
            <person name="Hayashizaki Y."/>
            <person name="Shinozaki K."/>
        </authorList>
    </citation>
    <scope>NUCLEOTIDE SEQUENCE [LARGE SCALE MRNA] OF 246-695</scope>
    <source>
        <strain>cv. Columbia</strain>
    </source>
</reference>
<reference key="5">
    <citation type="journal article" date="2010" name="Plant Mol. Biol.">
        <title>Characterization of DUF724 gene family in Arabidopsis thaliana.</title>
        <authorList>
            <person name="Cao X."/>
            <person name="Yang K.Z."/>
            <person name="Xia C."/>
            <person name="Zhang X.Q."/>
            <person name="Chen L.Q."/>
            <person name="Ye D."/>
        </authorList>
    </citation>
    <scope>FUNCTION</scope>
    <scope>GENE FAMILY</scope>
    <scope>NOMENCLATURE</scope>
    <scope>SUBUNIT</scope>
    <scope>DISRUPTION PHENOTYPE</scope>
</reference>
<comment type="function">
    <text evidence="6">May be involved in the polar growth of plant cells via transportation of RNAs.</text>
</comment>
<comment type="subunit">
    <text evidence="3">Homodimer.</text>
</comment>
<comment type="disruption phenotype">
    <text evidence="3">No visible phenotype under normal growth conditions.</text>
</comment>
<name>DUF3_ARATH</name>
<protein>
    <recommendedName>
        <fullName evidence="5">DUF724 domain-containing protein 3</fullName>
        <shortName evidence="4">AtDUF3</shortName>
    </recommendedName>
</protein>
<gene>
    <name evidence="4" type="primary">DUF3</name>
    <name evidence="7" type="ordered locus">At1g26540</name>
    <name evidence="8" type="ORF">T1K7.9</name>
</gene>
<feature type="chain" id="PRO_0000436421" description="DUF724 domain-containing protein 3">
    <location>
        <begin position="1"/>
        <end position="695"/>
    </location>
</feature>
<feature type="domain" description="DUF724" evidence="1">
    <location>
        <begin position="509"/>
        <end position="694"/>
    </location>
</feature>
<feature type="region of interest" description="Disordered" evidence="2">
    <location>
        <begin position="376"/>
        <end position="464"/>
    </location>
</feature>
<feature type="coiled-coil region" evidence="1">
    <location>
        <begin position="614"/>
        <end position="684"/>
    </location>
</feature>
<feature type="compositionally biased region" description="Basic and acidic residues" evidence="2">
    <location>
        <begin position="384"/>
        <end position="402"/>
    </location>
</feature>
<feature type="compositionally biased region" description="Polar residues" evidence="2">
    <location>
        <begin position="434"/>
        <end position="459"/>
    </location>
</feature>
<feature type="sequence conflict" description="In Ref. 4; BAF01676." evidence="5" ref="4">
    <original>L</original>
    <variation>S</variation>
    <location>
        <position position="300"/>
    </location>
</feature>
<dbReference type="EMBL" id="AC013427">
    <property type="protein sequence ID" value="AAF98563.1"/>
    <property type="molecule type" value="Genomic_DNA"/>
</dbReference>
<dbReference type="EMBL" id="CP002684">
    <property type="protein sequence ID" value="AEE30702.1"/>
    <property type="molecule type" value="Genomic_DNA"/>
</dbReference>
<dbReference type="EMBL" id="AK117551">
    <property type="protein sequence ID" value="BAC42212.1"/>
    <property type="molecule type" value="mRNA"/>
</dbReference>
<dbReference type="EMBL" id="AK229847">
    <property type="protein sequence ID" value="BAF01676.1"/>
    <property type="molecule type" value="mRNA"/>
</dbReference>
<dbReference type="PIR" id="D86392">
    <property type="entry name" value="D86392"/>
</dbReference>
<dbReference type="RefSeq" id="NP_173976.1">
    <property type="nucleotide sequence ID" value="NM_102416.3"/>
</dbReference>
<dbReference type="SMR" id="Q9FZD9"/>
<dbReference type="FunCoup" id="Q9FZD9">
    <property type="interactions" value="450"/>
</dbReference>
<dbReference type="STRING" id="3702.Q9FZD9"/>
<dbReference type="iPTMnet" id="Q9FZD9"/>
<dbReference type="PaxDb" id="3702-AT1G26540.1"/>
<dbReference type="ProteomicsDB" id="221876"/>
<dbReference type="EnsemblPlants" id="AT1G26540.1">
    <property type="protein sequence ID" value="AT1G26540.1"/>
    <property type="gene ID" value="AT1G26540"/>
</dbReference>
<dbReference type="GeneID" id="839194"/>
<dbReference type="Gramene" id="AT1G26540.1">
    <property type="protein sequence ID" value="AT1G26540.1"/>
    <property type="gene ID" value="AT1G26540"/>
</dbReference>
<dbReference type="KEGG" id="ath:AT1G26540"/>
<dbReference type="Araport" id="AT1G26540"/>
<dbReference type="TAIR" id="AT1G26540"/>
<dbReference type="eggNOG" id="ENOG502QTQX">
    <property type="taxonomic scope" value="Eukaryota"/>
</dbReference>
<dbReference type="HOGENOM" id="CLU_007138_1_0_1"/>
<dbReference type="InParanoid" id="Q9FZD9"/>
<dbReference type="OMA" id="TVEYLHW"/>
<dbReference type="OrthoDB" id="687110at2759"/>
<dbReference type="PhylomeDB" id="Q9FZD9"/>
<dbReference type="PRO" id="PR:Q9FZD9"/>
<dbReference type="Proteomes" id="UP000006548">
    <property type="component" value="Chromosome 1"/>
</dbReference>
<dbReference type="ExpressionAtlas" id="Q9FZD9">
    <property type="expression patterns" value="baseline and differential"/>
</dbReference>
<dbReference type="GO" id="GO:0000325">
    <property type="term" value="C:plant-type vacuole"/>
    <property type="evidence" value="ECO:0007005"/>
    <property type="project" value="TAIR"/>
</dbReference>
<dbReference type="GO" id="GO:0042803">
    <property type="term" value="F:protein homodimerization activity"/>
    <property type="evidence" value="ECO:0000353"/>
    <property type="project" value="UniProtKB"/>
</dbReference>
<dbReference type="CDD" id="cd20405">
    <property type="entry name" value="Tudor_Agenet_AtDUF_rpt1_3"/>
    <property type="match status" value="2"/>
</dbReference>
<dbReference type="CDD" id="cd20406">
    <property type="entry name" value="Tudor_Agenet_AtDUF_rpt2_4"/>
    <property type="match status" value="2"/>
</dbReference>
<dbReference type="InterPro" id="IPR008395">
    <property type="entry name" value="Agenet-like_dom"/>
</dbReference>
<dbReference type="InterPro" id="IPR014002">
    <property type="entry name" value="Agenet_dom_plant"/>
</dbReference>
<dbReference type="InterPro" id="IPR007930">
    <property type="entry name" value="DUF724"/>
</dbReference>
<dbReference type="PANTHER" id="PTHR31917">
    <property type="entry name" value="AGENET DOMAIN-CONTAINING PROTEIN-RELATED"/>
    <property type="match status" value="1"/>
</dbReference>
<dbReference type="PANTHER" id="PTHR31917:SF50">
    <property type="entry name" value="DUF724 DOMAIN-CONTAINING PROTEIN 1-RELATED"/>
    <property type="match status" value="1"/>
</dbReference>
<dbReference type="Pfam" id="PF05641">
    <property type="entry name" value="Agenet"/>
    <property type="match status" value="2"/>
</dbReference>
<dbReference type="Pfam" id="PF05266">
    <property type="entry name" value="DUF724"/>
    <property type="match status" value="1"/>
</dbReference>
<dbReference type="SMART" id="SM00743">
    <property type="entry name" value="Agenet"/>
    <property type="match status" value="4"/>
</dbReference>
<accession>Q9FZD9</accession>
<accession>Q0WMH5</accession>
<sequence length="695" mass="79211">MELQTMKITKDCVVEVSSEEEGFEGAWFRAVLEENPGNSSRRKLRVRYSTLLDMDGSSPLIEHIEQRFIRPVPPEENQQKDVVLEEGLLVDADHKDGWWTGVVVKKMEDDNYLVYFDLPPDIIQFERKQLRTHLIWTGGTWIQPEIEESNKSMFSPGTMVEVFSAKEAVWSPAMVVKETDVDDKKKFIVKDCNRYLSCNGDEARPTNIVNSRRVRPIPPPSSVDKYALLESVETFSGLGWHKGQVRKILSENRYTVRLEATQQESTIRHSDLRPFMVWEDGVWYNDLKQKPIKETPPTILKRKPMRSCSAAKSMTPTSATKHLRSFLNSKEISETPTKAKFVSATRELGKNKADAVMNDKTHLLITPQETSIAPVITVTPLKQQDAETEGKKSPKKTPEPVKHQNGLENSSTQHEMPEEENSNEKSRKRKREQNQNSNLNETDETCNVSKAGVNGTSDTIRVDDVDDQPLSSWINIPTVLSSDQSSNVVDNSAADVEETQAKGALTIEPFTKNLPFWKTYEMEKGYKTVPQNPHFSPLLEFKEDIREWSAVGMMVSFYGLLEEVKKLQLDVSSSKLGSLSTCFAELEKHGFDIATPQSRINKVLSLQVGRAKKVEERKCLEKRIEAEEIEMQKFEHEMVEVERKMLELKRRAEVAKEKKEAADKMIVEMKSSAETIDQEIANVELEFITSVLAPW</sequence>